<comment type="function">
    <text evidence="4 5">Probable transcription factor that acts together with OBE1 for the maintenance and/or establishment of both the shoot and root meristems, probably by controlling the expression of the meristem genes such as WUS, PLT1 and PLT2 and of genes required for auxin responses. Promotes cell meristematic activity via the WUSCHEL-CLAVATA pathway. Involved in the development of the basal pole and in auxin-mediated root and vascular development in the embryo. Confers sensitivity to turnip mosaic virus (TuMV) probably by promoting viral movement and multiplication via interaction with TuMV VPg.</text>
</comment>
<comment type="subunit">
    <text evidence="3 4 5 6">Self-interacts (PubMed:18403411, PubMed:19392692, PubMed:22378640). Interacts with OBE1, OBE3 and OBE4 (PubMed:19392692, PubMed:22378640). Binds to VPg of pea seed borne mosaic virus (PSbMV), turnip mosaic virus (TuMV) and lettuce mosaic virus (LMV), but not with VPg of tobacco etch virus (TEV), cowpea mosaic virus (CPMV), tomato black ring virus (TBRV) and grapevine fan leaf virus (GFLV) (PubMed:14963126).</text>
</comment>
<comment type="subcellular location">
    <subcellularLocation>
        <location evidence="4">Nucleus</location>
    </subcellularLocation>
</comment>
<comment type="tissue specificity">
    <text evidence="4 5">Expressed in roots, seedlings, stems, leaves, flowers and siliques, especially in the vasculature.</text>
</comment>
<comment type="developmental stage">
    <text evidence="4 5">First observed in the embryo proper at the four-cell stage. Later expressed throughout the embryo from the eight-cell to the bent-cotyledon stages. Until the torpedo stage of development, mostly concentrated at the root pole. Hardly detected in the suspensor. Present in seedling roots. In mature and fully differentiated young roots, restricted to root tips.</text>
</comment>
<comment type="induction">
    <text evidence="5">By auxin in the root elongation zone.</text>
</comment>
<comment type="disruption phenotype">
    <text evidence="4 5">No visible phenotype. When associated with OBE1 disruption, plants exhibit premature termination of the shoot meristem and impaired root apical meristem establishment, leading to a diminutive phenotype characterized by an absence of roots and defective development of the vasculature.</text>
</comment>
<feature type="chain" id="PRO_0000399747" description="Protein OBERON 2">
    <location>
        <begin position="1"/>
        <end position="574"/>
    </location>
</feature>
<feature type="zinc finger region" description="PHD-type">
    <location>
        <begin position="226"/>
        <end position="291"/>
    </location>
</feature>
<feature type="region of interest" description="Disordered" evidence="2">
    <location>
        <begin position="1"/>
        <end position="76"/>
    </location>
</feature>
<feature type="coiled-coil region" evidence="1">
    <location>
        <begin position="416"/>
        <end position="524"/>
    </location>
</feature>
<feature type="compositionally biased region" description="Polar residues" evidence="2">
    <location>
        <begin position="1"/>
        <end position="10"/>
    </location>
</feature>
<feature type="compositionally biased region" description="Polar residues" evidence="2">
    <location>
        <begin position="65"/>
        <end position="76"/>
    </location>
</feature>
<feature type="sequence conflict" description="In Ref. 4; BAE99299." evidence="9" ref="4">
    <original>D</original>
    <variation>G</variation>
    <location>
        <position position="136"/>
    </location>
</feature>
<feature type="sequence conflict" description="In Ref. 3; BAH20018." evidence="9" ref="3">
    <original>L</original>
    <variation>F</variation>
    <location>
        <position position="361"/>
    </location>
</feature>
<feature type="sequence conflict" description="In Ref. 4; BAE99299." evidence="9" ref="4">
    <original>E</original>
    <variation>G</variation>
    <location>
        <position position="493"/>
    </location>
</feature>
<keyword id="KW-0175">Coiled coil</keyword>
<keyword id="KW-0217">Developmental protein</keyword>
<keyword id="KW-0945">Host-virus interaction</keyword>
<keyword id="KW-0479">Metal-binding</keyword>
<keyword id="KW-0539">Nucleus</keyword>
<keyword id="KW-1185">Reference proteome</keyword>
<keyword id="KW-0804">Transcription</keyword>
<keyword id="KW-0805">Transcription regulation</keyword>
<keyword id="KW-0862">Zinc</keyword>
<keyword id="KW-0863">Zinc-finger</keyword>
<name>OBE2_ARATH</name>
<dbReference type="EMBL" id="AB023039">
    <property type="protein sequence ID" value="BAA96996.1"/>
    <property type="molecule type" value="Genomic_DNA"/>
</dbReference>
<dbReference type="EMBL" id="CP002688">
    <property type="protein sequence ID" value="AED95626.1"/>
    <property type="molecule type" value="Genomic_DNA"/>
</dbReference>
<dbReference type="EMBL" id="CP002688">
    <property type="protein sequence ID" value="AED95627.1"/>
    <property type="molecule type" value="Genomic_DNA"/>
</dbReference>
<dbReference type="EMBL" id="AK317346">
    <property type="protein sequence ID" value="BAH20018.1"/>
    <property type="molecule type" value="mRNA"/>
</dbReference>
<dbReference type="EMBL" id="AK317672">
    <property type="protein sequence ID" value="BAH20332.1"/>
    <property type="molecule type" value="mRNA"/>
</dbReference>
<dbReference type="EMBL" id="AK220595">
    <property type="protein sequence ID" value="BAD94916.1"/>
    <property type="molecule type" value="mRNA"/>
</dbReference>
<dbReference type="EMBL" id="AK227275">
    <property type="protein sequence ID" value="BAE99299.1"/>
    <property type="molecule type" value="mRNA"/>
</dbReference>
<dbReference type="RefSeq" id="NP_001032031.1">
    <property type="nucleotide sequence ID" value="NM_001036954.1"/>
</dbReference>
<dbReference type="RefSeq" id="NP_199627.1">
    <property type="nucleotide sequence ID" value="NM_124190.4"/>
</dbReference>
<dbReference type="BioGRID" id="20115">
    <property type="interactions" value="5"/>
</dbReference>
<dbReference type="FunCoup" id="Q9LUB7">
    <property type="interactions" value="1538"/>
</dbReference>
<dbReference type="STRING" id="3702.Q9LUB7"/>
<dbReference type="iPTMnet" id="Q9LUB7"/>
<dbReference type="PaxDb" id="3702-AT5G48160.2"/>
<dbReference type="ProteomicsDB" id="250953"/>
<dbReference type="EnsemblPlants" id="AT5G48160.1">
    <property type="protein sequence ID" value="AT5G48160.1"/>
    <property type="gene ID" value="AT5G48160"/>
</dbReference>
<dbReference type="EnsemblPlants" id="AT5G48160.2">
    <property type="protein sequence ID" value="AT5G48160.2"/>
    <property type="gene ID" value="AT5G48160"/>
</dbReference>
<dbReference type="GeneID" id="834868"/>
<dbReference type="Gramene" id="AT5G48160.1">
    <property type="protein sequence ID" value="AT5G48160.1"/>
    <property type="gene ID" value="AT5G48160"/>
</dbReference>
<dbReference type="Gramene" id="AT5G48160.2">
    <property type="protein sequence ID" value="AT5G48160.2"/>
    <property type="gene ID" value="AT5G48160"/>
</dbReference>
<dbReference type="KEGG" id="ath:AT5G48160"/>
<dbReference type="Araport" id="AT5G48160"/>
<dbReference type="TAIR" id="AT5G48160">
    <property type="gene designation" value="OBE2"/>
</dbReference>
<dbReference type="eggNOG" id="ENOG502QSQF">
    <property type="taxonomic scope" value="Eukaryota"/>
</dbReference>
<dbReference type="HOGENOM" id="CLU_006737_2_0_1"/>
<dbReference type="InParanoid" id="Q9LUB7"/>
<dbReference type="OMA" id="QPSSKML"/>
<dbReference type="PhylomeDB" id="Q9LUB7"/>
<dbReference type="PRO" id="PR:Q9LUB7"/>
<dbReference type="Proteomes" id="UP000006548">
    <property type="component" value="Chromosome 5"/>
</dbReference>
<dbReference type="ExpressionAtlas" id="Q9LUB7">
    <property type="expression patterns" value="baseline and differential"/>
</dbReference>
<dbReference type="GO" id="GO:0005634">
    <property type="term" value="C:nucleus"/>
    <property type="evidence" value="ECO:0000314"/>
    <property type="project" value="TAIR"/>
</dbReference>
<dbReference type="GO" id="GO:0042802">
    <property type="term" value="F:identical protein binding"/>
    <property type="evidence" value="ECO:0000353"/>
    <property type="project" value="UniProtKB"/>
</dbReference>
<dbReference type="GO" id="GO:0008270">
    <property type="term" value="F:zinc ion binding"/>
    <property type="evidence" value="ECO:0007669"/>
    <property type="project" value="UniProtKB-KW"/>
</dbReference>
<dbReference type="GO" id="GO:0009793">
    <property type="term" value="P:embryo development ending in seed dormancy"/>
    <property type="evidence" value="ECO:0000316"/>
    <property type="project" value="TAIR"/>
</dbReference>
<dbReference type="GO" id="GO:0010078">
    <property type="term" value="P:maintenance of root meristem identity"/>
    <property type="evidence" value="ECO:0000316"/>
    <property type="project" value="TAIR"/>
</dbReference>
<dbReference type="GO" id="GO:0010492">
    <property type="term" value="P:maintenance of shoot apical meristem identity"/>
    <property type="evidence" value="ECO:0000316"/>
    <property type="project" value="TAIR"/>
</dbReference>
<dbReference type="GO" id="GO:0080022">
    <property type="term" value="P:primary root development"/>
    <property type="evidence" value="ECO:0000316"/>
    <property type="project" value="TAIR"/>
</dbReference>
<dbReference type="GO" id="GO:0010468">
    <property type="term" value="P:regulation of gene expression"/>
    <property type="evidence" value="ECO:0000316"/>
    <property type="project" value="TAIR"/>
</dbReference>
<dbReference type="GO" id="GO:0010071">
    <property type="term" value="P:root meristem specification"/>
    <property type="evidence" value="ECO:0000316"/>
    <property type="project" value="TAIR"/>
</dbReference>
<dbReference type="GO" id="GO:0046740">
    <property type="term" value="P:transport of virus in host, cell to cell"/>
    <property type="evidence" value="ECO:0000315"/>
    <property type="project" value="UniProtKB"/>
</dbReference>
<dbReference type="CDD" id="cd15612">
    <property type="entry name" value="PHD_OBE1_like"/>
    <property type="match status" value="1"/>
</dbReference>
<dbReference type="InterPro" id="IPR047578">
    <property type="entry name" value="OBE1-like_PHD"/>
</dbReference>
<dbReference type="InterPro" id="IPR004082">
    <property type="entry name" value="OBERON"/>
</dbReference>
<dbReference type="InterPro" id="IPR032881">
    <property type="entry name" value="Oberon-like_PHD"/>
</dbReference>
<dbReference type="InterPro" id="IPR032535">
    <property type="entry name" value="Oberon_cc"/>
</dbReference>
<dbReference type="InterPro" id="IPR001965">
    <property type="entry name" value="Znf_PHD"/>
</dbReference>
<dbReference type="PANTHER" id="PTHR21736:SF37">
    <property type="entry name" value="PROTEIN OBERON 2"/>
    <property type="match status" value="1"/>
</dbReference>
<dbReference type="PANTHER" id="PTHR21736">
    <property type="entry name" value="VERNALIZATION-INSENSITIVE PROTEIN 3"/>
    <property type="match status" value="1"/>
</dbReference>
<dbReference type="Pfam" id="PF16312">
    <property type="entry name" value="Oberon_cc"/>
    <property type="match status" value="1"/>
</dbReference>
<dbReference type="Pfam" id="PF07227">
    <property type="entry name" value="PHD_Oberon"/>
    <property type="match status" value="1"/>
</dbReference>
<dbReference type="PIRSF" id="PIRSF025218">
    <property type="entry name" value="DUF1423_pln"/>
    <property type="match status" value="1"/>
</dbReference>
<dbReference type="PRINTS" id="PR01544">
    <property type="entry name" value="ARATH130DUF"/>
</dbReference>
<dbReference type="SMART" id="SM00249">
    <property type="entry name" value="PHD"/>
    <property type="match status" value="1"/>
</dbReference>
<dbReference type="PROSITE" id="PS01359">
    <property type="entry name" value="ZF_PHD_1"/>
    <property type="match status" value="1"/>
</dbReference>
<evidence type="ECO:0000255" key="1"/>
<evidence type="ECO:0000256" key="2">
    <source>
        <dbReference type="SAM" id="MobiDB-lite"/>
    </source>
</evidence>
<evidence type="ECO:0000269" key="3">
    <source>
    </source>
</evidence>
<evidence type="ECO:0000269" key="4">
    <source>
    </source>
</evidence>
<evidence type="ECO:0000269" key="5">
    <source>
    </source>
</evidence>
<evidence type="ECO:0000269" key="6">
    <source>
    </source>
</evidence>
<evidence type="ECO:0000303" key="7">
    <source>
    </source>
</evidence>
<evidence type="ECO:0000303" key="8">
    <source>
    </source>
</evidence>
<evidence type="ECO:0000305" key="9"/>
<evidence type="ECO:0000312" key="10">
    <source>
        <dbReference type="Araport" id="AT5G48160"/>
    </source>
</evidence>
<evidence type="ECO:0000312" key="11">
    <source>
        <dbReference type="EMBL" id="BAA96996.1"/>
    </source>
</evidence>
<organism>
    <name type="scientific">Arabidopsis thaliana</name>
    <name type="common">Mouse-ear cress</name>
    <dbReference type="NCBI Taxonomy" id="3702"/>
    <lineage>
        <taxon>Eukaryota</taxon>
        <taxon>Viridiplantae</taxon>
        <taxon>Streptophyta</taxon>
        <taxon>Embryophyta</taxon>
        <taxon>Tracheophyta</taxon>
        <taxon>Spermatophyta</taxon>
        <taxon>Magnoliopsida</taxon>
        <taxon>eudicotyledons</taxon>
        <taxon>Gunneridae</taxon>
        <taxon>Pentapetalae</taxon>
        <taxon>rosids</taxon>
        <taxon>malvids</taxon>
        <taxon>Brassicales</taxon>
        <taxon>Brassicaceae</taxon>
        <taxon>Camelineae</taxon>
        <taxon>Arabidopsis</taxon>
    </lineage>
</organism>
<protein>
    <recommendedName>
        <fullName evidence="8">Protein OBERON 2</fullName>
    </recommendedName>
    <alternativeName>
        <fullName evidence="7">Potyvirus VPg-interacting protein 1</fullName>
    </alternativeName>
</protein>
<gene>
    <name evidence="8" type="primary">OBE2</name>
    <name evidence="7" type="synonym">PVIP1</name>
    <name evidence="10" type="ordered locus">At5g48160</name>
    <name evidence="11" type="ORF">MIF21.5</name>
</gene>
<sequence>MGTSSGSNHPHQMLPPRQQQRSGGGLETALSLVSSDQEPRRESPAESASSQETWPLGDTVAGKKSMSQKTEPDSMEQTVNVMHHVSNADKVSVRDIARERVELVAERMHRLPDEFLDELKNGLKSILEGNVAQSVDEFMFLQKVVQSRTDLSSVTLVRAHRVQLEILVAINTGIQAFLHPNISLSQPSLIEIFVYKRCRNIACQNQLPADDCYCDICTNRKGFCNLCMCTICNKFDFSVNTCRWIGCDLCSHWTHTDCAIRDGQITTGSSAKNNTSGPGEIVFKCRACNRTSELLGWVKDVFQHCAPNWDRESLMKELDFVSRIFRGSEDQRGRKLFWKCEELIDKIKGGLAEATAAKLILMFFQEIESDSAKSFENGEGGRLMAPQDACNRIAEVVQETLRKMEIVAEEKMRMFKKARMALETCDRELEDKAKEVSELKAERQKKKLQIDELERIVRLKQAEADMFQLKANEAKREADRLQRIVLAKMDKSEEEYASNYLKQRLSEAEAEKQYLFEKIKLQENSRVASQSSGGGGDPSQVMMYSKIRDLLQGYNLSPKVDPQLNERNPFRSNP</sequence>
<reference key="1">
    <citation type="journal article" date="2000" name="DNA Res.">
        <title>Structural analysis of Arabidopsis thaliana chromosome 5. X. Sequence features of the regions of 3,076,755 bp covered by sixty P1 and TAC clones.</title>
        <authorList>
            <person name="Sato S."/>
            <person name="Nakamura Y."/>
            <person name="Kaneko T."/>
            <person name="Katoh T."/>
            <person name="Asamizu E."/>
            <person name="Kotani H."/>
            <person name="Tabata S."/>
        </authorList>
    </citation>
    <scope>NUCLEOTIDE SEQUENCE [LARGE SCALE GENOMIC DNA]</scope>
    <source>
        <strain>cv. Columbia</strain>
    </source>
</reference>
<reference key="2">
    <citation type="journal article" date="2017" name="Plant J.">
        <title>Araport11: a complete reannotation of the Arabidopsis thaliana reference genome.</title>
        <authorList>
            <person name="Cheng C.Y."/>
            <person name="Krishnakumar V."/>
            <person name="Chan A.P."/>
            <person name="Thibaud-Nissen F."/>
            <person name="Schobel S."/>
            <person name="Town C.D."/>
        </authorList>
    </citation>
    <scope>GENOME REANNOTATION</scope>
    <source>
        <strain>cv. Columbia</strain>
    </source>
</reference>
<reference key="3">
    <citation type="journal article" date="2009" name="DNA Res.">
        <title>Analysis of multiple occurrences of alternative splicing events in Arabidopsis thaliana using novel sequenced full-length cDNAs.</title>
        <authorList>
            <person name="Iida K."/>
            <person name="Fukami-Kobayashi K."/>
            <person name="Toyoda A."/>
            <person name="Sakaki Y."/>
            <person name="Kobayashi M."/>
            <person name="Seki M."/>
            <person name="Shinozaki K."/>
        </authorList>
    </citation>
    <scope>NUCLEOTIDE SEQUENCE [LARGE SCALE MRNA]</scope>
    <source>
        <strain>cv. Columbia</strain>
        <tissue>Rosette leaf</tissue>
    </source>
</reference>
<reference key="4">
    <citation type="submission" date="2006-07" db="EMBL/GenBank/DDBJ databases">
        <title>Large-scale analysis of RIKEN Arabidopsis full-length (RAFL) cDNAs.</title>
        <authorList>
            <person name="Totoki Y."/>
            <person name="Seki M."/>
            <person name="Ishida J."/>
            <person name="Nakajima M."/>
            <person name="Enju A."/>
            <person name="Kamiya A."/>
            <person name="Narusaka M."/>
            <person name="Shin-i T."/>
            <person name="Nakagawa M."/>
            <person name="Sakamoto N."/>
            <person name="Oishi K."/>
            <person name="Kohara Y."/>
            <person name="Kobayashi M."/>
            <person name="Toyoda A."/>
            <person name="Sakaki Y."/>
            <person name="Sakurai T."/>
            <person name="Iida K."/>
            <person name="Akiyama K."/>
            <person name="Satou M."/>
            <person name="Toyoda T."/>
            <person name="Konagaya A."/>
            <person name="Carninci P."/>
            <person name="Kawai J."/>
            <person name="Hayashizaki Y."/>
            <person name="Shinozaki K."/>
        </authorList>
    </citation>
    <scope>NUCLEOTIDE SEQUENCE [LARGE SCALE MRNA]</scope>
    <source>
        <strain>cv. Columbia</strain>
    </source>
</reference>
<reference key="5">
    <citation type="journal article" date="2004" name="J. Virol.">
        <title>A cysteine-rich plant protein potentiates Potyvirus movement through an interaction with the virus genome-linked protein VPg.</title>
        <authorList>
            <person name="Dunoyer P."/>
            <person name="Thomas C."/>
            <person name="Harrison S."/>
            <person name="Revers F."/>
            <person name="Maule A."/>
        </authorList>
    </citation>
    <scope>INTERACTION WITH POTYVIRUS VPG PROTEIN</scope>
</reference>
<reference key="6">
    <citation type="journal article" date="2008" name="Development">
        <title>The Arabidopsis OBERON1 and OBERON2 genes encode plant homeodomain finger proteins and are required for apical meristem maintenance.</title>
        <authorList>
            <person name="Saiga S."/>
            <person name="Furumizu C."/>
            <person name="Yokoyama R."/>
            <person name="Kurata T."/>
            <person name="Sato S."/>
            <person name="Kato T."/>
            <person name="Tabata S."/>
            <person name="Suzuki M."/>
            <person name="Komeda Y."/>
        </authorList>
    </citation>
    <scope>FUNCTION</scope>
    <scope>DISRUPTION PHENOTYPE</scope>
    <scope>SUBCELLULAR LOCATION</scope>
    <scope>TISSUE SPECIFICITY</scope>
    <scope>DEVELOPMENTAL STAGE</scope>
    <scope>DIMERIZATION</scope>
</reference>
<reference key="7">
    <citation type="journal article" date="2009" name="Plant J.">
        <title>Arabidopsis plant homeodomain finger proteins operate downstream of auxin accumulation in specifying the vasculature and primary root meristem.</title>
        <authorList>
            <person name="Thomas C.L."/>
            <person name="Schmidt D."/>
            <person name="Bayer E.M."/>
            <person name="Dreos R."/>
            <person name="Maule A.J."/>
        </authorList>
    </citation>
    <scope>FUNCTION</scope>
    <scope>DISRUPTION PHENOTYPE</scope>
    <scope>TISSUE SPECIFICITY</scope>
    <scope>DEVELOPMENTAL STAGE</scope>
    <scope>INDUCTION BY AUXIN</scope>
    <scope>SUBUNIT</scope>
    <scope>INTERACTION WITH OBE1; OBE3 AND OBE4</scope>
</reference>
<reference key="8">
    <citation type="journal article" date="2012" name="Development">
        <title>Control of embryonic meristem initiation in Arabidopsis by PHD-finger protein complexes.</title>
        <authorList>
            <person name="Saiga S."/>
            <person name="Moeller B."/>
            <person name="Watanabe-Taneda A."/>
            <person name="Abe M."/>
            <person name="Weijers D."/>
            <person name="Komeda Y."/>
        </authorList>
    </citation>
    <scope>INTERACTION WITH OBE1; OBE3 AND OBE4</scope>
</reference>
<proteinExistence type="evidence at protein level"/>
<accession>Q9LUB7</accession>
<accession>B9DH01</accession>
<accession>Q0WU99</accession>
<accession>Q570W2</accession>